<evidence type="ECO:0000255" key="1">
    <source>
        <dbReference type="HAMAP-Rule" id="MF_01147"/>
    </source>
</evidence>
<protein>
    <recommendedName>
        <fullName evidence="1">Phosphatidylglycerol--prolipoprotein diacylglyceryl transferase</fullName>
        <ecNumber evidence="1">2.5.1.145</ecNumber>
    </recommendedName>
</protein>
<comment type="function">
    <text evidence="1">Catalyzes the transfer of the diacylglyceryl group from phosphatidylglycerol to the sulfhydryl group of the N-terminal cysteine of a prolipoprotein, the first step in the formation of mature lipoproteins.</text>
</comment>
<comment type="catalytic activity">
    <reaction evidence="1">
        <text>L-cysteinyl-[prolipoprotein] + a 1,2-diacyl-sn-glycero-3-phospho-(1'-sn-glycerol) = an S-1,2-diacyl-sn-glyceryl-L-cysteinyl-[prolipoprotein] + sn-glycerol 1-phosphate + H(+)</text>
        <dbReference type="Rhea" id="RHEA:56712"/>
        <dbReference type="Rhea" id="RHEA-COMP:14679"/>
        <dbReference type="Rhea" id="RHEA-COMP:14680"/>
        <dbReference type="ChEBI" id="CHEBI:15378"/>
        <dbReference type="ChEBI" id="CHEBI:29950"/>
        <dbReference type="ChEBI" id="CHEBI:57685"/>
        <dbReference type="ChEBI" id="CHEBI:64716"/>
        <dbReference type="ChEBI" id="CHEBI:140658"/>
        <dbReference type="EC" id="2.5.1.145"/>
    </reaction>
</comment>
<comment type="pathway">
    <text evidence="1">Protein modification; lipoprotein biosynthesis (diacylglyceryl transfer).</text>
</comment>
<comment type="subcellular location">
    <subcellularLocation>
        <location evidence="1">Cell inner membrane</location>
        <topology evidence="1">Multi-pass membrane protein</topology>
    </subcellularLocation>
</comment>
<comment type="similarity">
    <text evidence="1">Belongs to the Lgt family.</text>
</comment>
<proteinExistence type="inferred from homology"/>
<sequence length="294" mass="33282">MSINYLKFPEIDPVMFSIGPVSLHWYGMMYLIGFVFALWLANRRAAKPNSGWQKSEVETLLYVGFVGVFIGGRLGYVLFYNLPVFLDNPLYLFKVWDGGMSFHGGLIGVICAMIWFARRTKRHFFQVADFVAPLIPFGLGLGRIGNFINGELWGRVTLDTPWAILFPGSRAEDLQLVAQDPTTLLPIIQQYGVLPRHPSQLYEMFLEGVVLFIILNIFVRKNRPMGSVSGLFLIGYGAFRIIVEFFRQPDAQLGLFSGISMGQILSIPMIILGIIFMVWAYRRDKATPQTPTTH</sequence>
<reference key="1">
    <citation type="journal article" date="2008" name="J. Bacteriol.">
        <title>Complete genome sequence of uropathogenic Proteus mirabilis, a master of both adherence and motility.</title>
        <authorList>
            <person name="Pearson M.M."/>
            <person name="Sebaihia M."/>
            <person name="Churcher C."/>
            <person name="Quail M.A."/>
            <person name="Seshasayee A.S."/>
            <person name="Luscombe N.M."/>
            <person name="Abdellah Z."/>
            <person name="Arrosmith C."/>
            <person name="Atkin B."/>
            <person name="Chillingworth T."/>
            <person name="Hauser H."/>
            <person name="Jagels K."/>
            <person name="Moule S."/>
            <person name="Mungall K."/>
            <person name="Norbertczak H."/>
            <person name="Rabbinowitsch E."/>
            <person name="Walker D."/>
            <person name="Whithead S."/>
            <person name="Thomson N.R."/>
            <person name="Rather P.N."/>
            <person name="Parkhill J."/>
            <person name="Mobley H.L.T."/>
        </authorList>
    </citation>
    <scope>NUCLEOTIDE SEQUENCE [LARGE SCALE GENOMIC DNA]</scope>
    <source>
        <strain>HI4320</strain>
    </source>
</reference>
<accession>B4F2G7</accession>
<organism>
    <name type="scientific">Proteus mirabilis (strain HI4320)</name>
    <dbReference type="NCBI Taxonomy" id="529507"/>
    <lineage>
        <taxon>Bacteria</taxon>
        <taxon>Pseudomonadati</taxon>
        <taxon>Pseudomonadota</taxon>
        <taxon>Gammaproteobacteria</taxon>
        <taxon>Enterobacterales</taxon>
        <taxon>Morganellaceae</taxon>
        <taxon>Proteus</taxon>
    </lineage>
</organism>
<keyword id="KW-0997">Cell inner membrane</keyword>
<keyword id="KW-1003">Cell membrane</keyword>
<keyword id="KW-0472">Membrane</keyword>
<keyword id="KW-1185">Reference proteome</keyword>
<keyword id="KW-0808">Transferase</keyword>
<keyword id="KW-0812">Transmembrane</keyword>
<keyword id="KW-1133">Transmembrane helix</keyword>
<dbReference type="EC" id="2.5.1.145" evidence="1"/>
<dbReference type="EMBL" id="AM942759">
    <property type="protein sequence ID" value="CAR44585.1"/>
    <property type="molecule type" value="Genomic_DNA"/>
</dbReference>
<dbReference type="RefSeq" id="WP_004245522.1">
    <property type="nucleotide sequence ID" value="NC_010554.1"/>
</dbReference>
<dbReference type="SMR" id="B4F2G7"/>
<dbReference type="EnsemblBacteria" id="CAR44585">
    <property type="protein sequence ID" value="CAR44585"/>
    <property type="gene ID" value="PMI2319"/>
</dbReference>
<dbReference type="GeneID" id="6800112"/>
<dbReference type="KEGG" id="pmr:PMI2319"/>
<dbReference type="eggNOG" id="COG0682">
    <property type="taxonomic scope" value="Bacteria"/>
</dbReference>
<dbReference type="HOGENOM" id="CLU_013386_1_0_6"/>
<dbReference type="UniPathway" id="UPA00664"/>
<dbReference type="Proteomes" id="UP000008319">
    <property type="component" value="Chromosome"/>
</dbReference>
<dbReference type="GO" id="GO:0005886">
    <property type="term" value="C:plasma membrane"/>
    <property type="evidence" value="ECO:0007669"/>
    <property type="project" value="UniProtKB-SubCell"/>
</dbReference>
<dbReference type="GO" id="GO:0008961">
    <property type="term" value="F:phosphatidylglycerol-prolipoprotein diacylglyceryl transferase activity"/>
    <property type="evidence" value="ECO:0007669"/>
    <property type="project" value="UniProtKB-UniRule"/>
</dbReference>
<dbReference type="GO" id="GO:0042158">
    <property type="term" value="P:lipoprotein biosynthetic process"/>
    <property type="evidence" value="ECO:0007669"/>
    <property type="project" value="UniProtKB-UniRule"/>
</dbReference>
<dbReference type="HAMAP" id="MF_01147">
    <property type="entry name" value="Lgt"/>
    <property type="match status" value="1"/>
</dbReference>
<dbReference type="InterPro" id="IPR001640">
    <property type="entry name" value="Lgt"/>
</dbReference>
<dbReference type="NCBIfam" id="TIGR00544">
    <property type="entry name" value="lgt"/>
    <property type="match status" value="1"/>
</dbReference>
<dbReference type="PANTHER" id="PTHR30589:SF0">
    <property type="entry name" value="PHOSPHATIDYLGLYCEROL--PROLIPOPROTEIN DIACYLGLYCERYL TRANSFERASE"/>
    <property type="match status" value="1"/>
</dbReference>
<dbReference type="PANTHER" id="PTHR30589">
    <property type="entry name" value="PROLIPOPROTEIN DIACYLGLYCERYL TRANSFERASE"/>
    <property type="match status" value="1"/>
</dbReference>
<dbReference type="Pfam" id="PF01790">
    <property type="entry name" value="LGT"/>
    <property type="match status" value="1"/>
</dbReference>
<dbReference type="PROSITE" id="PS01311">
    <property type="entry name" value="LGT"/>
    <property type="match status" value="1"/>
</dbReference>
<feature type="chain" id="PRO_1000137444" description="Phosphatidylglycerol--prolipoprotein diacylglyceryl transferase">
    <location>
        <begin position="1"/>
        <end position="294"/>
    </location>
</feature>
<feature type="transmembrane region" description="Helical" evidence="1">
    <location>
        <begin position="21"/>
        <end position="41"/>
    </location>
</feature>
<feature type="transmembrane region" description="Helical" evidence="1">
    <location>
        <begin position="60"/>
        <end position="80"/>
    </location>
</feature>
<feature type="transmembrane region" description="Helical" evidence="1">
    <location>
        <begin position="96"/>
        <end position="116"/>
    </location>
</feature>
<feature type="transmembrane region" description="Helical" evidence="1">
    <location>
        <begin position="124"/>
        <end position="144"/>
    </location>
</feature>
<feature type="transmembrane region" description="Helical" evidence="1">
    <location>
        <begin position="199"/>
        <end position="219"/>
    </location>
</feature>
<feature type="transmembrane region" description="Helical" evidence="1">
    <location>
        <begin position="226"/>
        <end position="246"/>
    </location>
</feature>
<feature type="transmembrane region" description="Helical" evidence="1">
    <location>
        <begin position="259"/>
        <end position="279"/>
    </location>
</feature>
<feature type="binding site" evidence="1">
    <location>
        <position position="143"/>
    </location>
    <ligand>
        <name>a 1,2-diacyl-sn-glycero-3-phospho-(1'-sn-glycerol)</name>
        <dbReference type="ChEBI" id="CHEBI:64716"/>
    </ligand>
</feature>
<name>LGT_PROMH</name>
<gene>
    <name evidence="1" type="primary">lgt</name>
    <name type="ordered locus">PMI2319</name>
</gene>